<accession>Q6G8I7</accession>
<protein>
    <recommendedName>
        <fullName evidence="1">UDP-N-acetylmuramate--L-alanine ligase</fullName>
        <ecNumber evidence="1">6.3.2.8</ecNumber>
    </recommendedName>
    <alternativeName>
        <fullName evidence="1">UDP-N-acetylmuramoyl-L-alanine synthetase</fullName>
    </alternativeName>
</protein>
<gene>
    <name evidence="1" type="primary">murC</name>
    <name type="ordered locus">SAS1666</name>
</gene>
<reference key="1">
    <citation type="journal article" date="2004" name="Proc. Natl. Acad. Sci. U.S.A.">
        <title>Complete genomes of two clinical Staphylococcus aureus strains: evidence for the rapid evolution of virulence and drug resistance.</title>
        <authorList>
            <person name="Holden M.T.G."/>
            <person name="Feil E.J."/>
            <person name="Lindsay J.A."/>
            <person name="Peacock S.J."/>
            <person name="Day N.P.J."/>
            <person name="Enright M.C."/>
            <person name="Foster T.J."/>
            <person name="Moore C.E."/>
            <person name="Hurst L."/>
            <person name="Atkin R."/>
            <person name="Barron A."/>
            <person name="Bason N."/>
            <person name="Bentley S.D."/>
            <person name="Chillingworth C."/>
            <person name="Chillingworth T."/>
            <person name="Churcher C."/>
            <person name="Clark L."/>
            <person name="Corton C."/>
            <person name="Cronin A."/>
            <person name="Doggett J."/>
            <person name="Dowd L."/>
            <person name="Feltwell T."/>
            <person name="Hance Z."/>
            <person name="Harris B."/>
            <person name="Hauser H."/>
            <person name="Holroyd S."/>
            <person name="Jagels K."/>
            <person name="James K.D."/>
            <person name="Lennard N."/>
            <person name="Line A."/>
            <person name="Mayes R."/>
            <person name="Moule S."/>
            <person name="Mungall K."/>
            <person name="Ormond D."/>
            <person name="Quail M.A."/>
            <person name="Rabbinowitsch E."/>
            <person name="Rutherford K.M."/>
            <person name="Sanders M."/>
            <person name="Sharp S."/>
            <person name="Simmonds M."/>
            <person name="Stevens K."/>
            <person name="Whitehead S."/>
            <person name="Barrell B.G."/>
            <person name="Spratt B.G."/>
            <person name="Parkhill J."/>
        </authorList>
    </citation>
    <scope>NUCLEOTIDE SEQUENCE [LARGE SCALE GENOMIC DNA]</scope>
    <source>
        <strain>MSSA476</strain>
    </source>
</reference>
<sequence>MTHYHFVGIKGSGMSSLAQIMHDLGHEVQGSDIENYVFTEVALRNKGIKILPFDANNIKEDMVVIQGNAFASSHEEIVRAHQLKLDVVSYNDFLGQIIDQYTSVAVTGAHGKTSTTGLLSHVMNGDKKTSFLIGDGTGMGLPESDYFAFEACEYRRHFLSYKPDYAIMTNIDFDHPDYFKDINDVFDAFQEMAHNVKKGIIAWGDDEHLRKIEADVPIYYYGFKDSDDIYAQNIQITDKGTAFDVYVDGEFYDHFLSPQYGDHTVLNALAVIAISYLEKLDVTNIKEALETFGGVKRRFNETTIANQVIVDDYAHHPREISATIETARKKYPHKEVVAVFQPHTFSRTQAFLNEFAESLSKADRVFLCEIFGSIRENTGALTIQDLIDKIEGASLINEDSINVLEQFDNAVVLFMGAGDIQKLQNAYLDKLGMKNAF</sequence>
<dbReference type="EC" id="6.3.2.8" evidence="1"/>
<dbReference type="EMBL" id="BX571857">
    <property type="protein sequence ID" value="CAG43469.1"/>
    <property type="molecule type" value="Genomic_DNA"/>
</dbReference>
<dbReference type="RefSeq" id="WP_000150169.1">
    <property type="nucleotide sequence ID" value="NC_002953.3"/>
</dbReference>
<dbReference type="SMR" id="Q6G8I7"/>
<dbReference type="KEGG" id="sas:SAS1666"/>
<dbReference type="HOGENOM" id="CLU_028104_1_0_9"/>
<dbReference type="UniPathway" id="UPA00219"/>
<dbReference type="GO" id="GO:0005737">
    <property type="term" value="C:cytoplasm"/>
    <property type="evidence" value="ECO:0007669"/>
    <property type="project" value="UniProtKB-SubCell"/>
</dbReference>
<dbReference type="GO" id="GO:0005524">
    <property type="term" value="F:ATP binding"/>
    <property type="evidence" value="ECO:0007669"/>
    <property type="project" value="UniProtKB-UniRule"/>
</dbReference>
<dbReference type="GO" id="GO:0008763">
    <property type="term" value="F:UDP-N-acetylmuramate-L-alanine ligase activity"/>
    <property type="evidence" value="ECO:0007669"/>
    <property type="project" value="UniProtKB-UniRule"/>
</dbReference>
<dbReference type="GO" id="GO:0051301">
    <property type="term" value="P:cell division"/>
    <property type="evidence" value="ECO:0007669"/>
    <property type="project" value="UniProtKB-KW"/>
</dbReference>
<dbReference type="GO" id="GO:0071555">
    <property type="term" value="P:cell wall organization"/>
    <property type="evidence" value="ECO:0007669"/>
    <property type="project" value="UniProtKB-KW"/>
</dbReference>
<dbReference type="GO" id="GO:0009252">
    <property type="term" value="P:peptidoglycan biosynthetic process"/>
    <property type="evidence" value="ECO:0007669"/>
    <property type="project" value="UniProtKB-UniRule"/>
</dbReference>
<dbReference type="GO" id="GO:0008360">
    <property type="term" value="P:regulation of cell shape"/>
    <property type="evidence" value="ECO:0007669"/>
    <property type="project" value="UniProtKB-KW"/>
</dbReference>
<dbReference type="Gene3D" id="3.90.190.20">
    <property type="entry name" value="Mur ligase, C-terminal domain"/>
    <property type="match status" value="1"/>
</dbReference>
<dbReference type="Gene3D" id="3.40.1190.10">
    <property type="entry name" value="Mur-like, catalytic domain"/>
    <property type="match status" value="1"/>
</dbReference>
<dbReference type="Gene3D" id="3.40.50.720">
    <property type="entry name" value="NAD(P)-binding Rossmann-like Domain"/>
    <property type="match status" value="1"/>
</dbReference>
<dbReference type="HAMAP" id="MF_00046">
    <property type="entry name" value="MurC"/>
    <property type="match status" value="1"/>
</dbReference>
<dbReference type="InterPro" id="IPR036565">
    <property type="entry name" value="Mur-like_cat_sf"/>
</dbReference>
<dbReference type="InterPro" id="IPR004101">
    <property type="entry name" value="Mur_ligase_C"/>
</dbReference>
<dbReference type="InterPro" id="IPR036615">
    <property type="entry name" value="Mur_ligase_C_dom_sf"/>
</dbReference>
<dbReference type="InterPro" id="IPR013221">
    <property type="entry name" value="Mur_ligase_cen"/>
</dbReference>
<dbReference type="InterPro" id="IPR000713">
    <property type="entry name" value="Mur_ligase_N"/>
</dbReference>
<dbReference type="InterPro" id="IPR050061">
    <property type="entry name" value="MurCDEF_pg_biosynth"/>
</dbReference>
<dbReference type="InterPro" id="IPR005758">
    <property type="entry name" value="UDP-N-AcMur_Ala_ligase_MurC"/>
</dbReference>
<dbReference type="NCBIfam" id="TIGR01082">
    <property type="entry name" value="murC"/>
    <property type="match status" value="1"/>
</dbReference>
<dbReference type="PANTHER" id="PTHR43445:SF3">
    <property type="entry name" value="UDP-N-ACETYLMURAMATE--L-ALANINE LIGASE"/>
    <property type="match status" value="1"/>
</dbReference>
<dbReference type="PANTHER" id="PTHR43445">
    <property type="entry name" value="UDP-N-ACETYLMURAMATE--L-ALANINE LIGASE-RELATED"/>
    <property type="match status" value="1"/>
</dbReference>
<dbReference type="Pfam" id="PF01225">
    <property type="entry name" value="Mur_ligase"/>
    <property type="match status" value="1"/>
</dbReference>
<dbReference type="Pfam" id="PF02875">
    <property type="entry name" value="Mur_ligase_C"/>
    <property type="match status" value="1"/>
</dbReference>
<dbReference type="Pfam" id="PF08245">
    <property type="entry name" value="Mur_ligase_M"/>
    <property type="match status" value="1"/>
</dbReference>
<dbReference type="SUPFAM" id="SSF51984">
    <property type="entry name" value="MurCD N-terminal domain"/>
    <property type="match status" value="1"/>
</dbReference>
<dbReference type="SUPFAM" id="SSF53623">
    <property type="entry name" value="MurD-like peptide ligases, catalytic domain"/>
    <property type="match status" value="1"/>
</dbReference>
<dbReference type="SUPFAM" id="SSF53244">
    <property type="entry name" value="MurD-like peptide ligases, peptide-binding domain"/>
    <property type="match status" value="1"/>
</dbReference>
<name>MURC_STAAS</name>
<proteinExistence type="inferred from homology"/>
<evidence type="ECO:0000255" key="1">
    <source>
        <dbReference type="HAMAP-Rule" id="MF_00046"/>
    </source>
</evidence>
<comment type="function">
    <text evidence="1">Cell wall formation.</text>
</comment>
<comment type="catalytic activity">
    <reaction evidence="1">
        <text>UDP-N-acetyl-alpha-D-muramate + L-alanine + ATP = UDP-N-acetyl-alpha-D-muramoyl-L-alanine + ADP + phosphate + H(+)</text>
        <dbReference type="Rhea" id="RHEA:23372"/>
        <dbReference type="ChEBI" id="CHEBI:15378"/>
        <dbReference type="ChEBI" id="CHEBI:30616"/>
        <dbReference type="ChEBI" id="CHEBI:43474"/>
        <dbReference type="ChEBI" id="CHEBI:57972"/>
        <dbReference type="ChEBI" id="CHEBI:70757"/>
        <dbReference type="ChEBI" id="CHEBI:83898"/>
        <dbReference type="ChEBI" id="CHEBI:456216"/>
        <dbReference type="EC" id="6.3.2.8"/>
    </reaction>
</comment>
<comment type="pathway">
    <text evidence="1">Cell wall biogenesis; peptidoglycan biosynthesis.</text>
</comment>
<comment type="subcellular location">
    <subcellularLocation>
        <location evidence="1">Cytoplasm</location>
    </subcellularLocation>
</comment>
<comment type="similarity">
    <text evidence="1">Belongs to the MurCDEF family.</text>
</comment>
<feature type="chain" id="PRO_0000182156" description="UDP-N-acetylmuramate--L-alanine ligase">
    <location>
        <begin position="1"/>
        <end position="437"/>
    </location>
</feature>
<feature type="binding site" evidence="1">
    <location>
        <begin position="108"/>
        <end position="114"/>
    </location>
    <ligand>
        <name>ATP</name>
        <dbReference type="ChEBI" id="CHEBI:30616"/>
    </ligand>
</feature>
<organism>
    <name type="scientific">Staphylococcus aureus (strain MSSA476)</name>
    <dbReference type="NCBI Taxonomy" id="282459"/>
    <lineage>
        <taxon>Bacteria</taxon>
        <taxon>Bacillati</taxon>
        <taxon>Bacillota</taxon>
        <taxon>Bacilli</taxon>
        <taxon>Bacillales</taxon>
        <taxon>Staphylococcaceae</taxon>
        <taxon>Staphylococcus</taxon>
    </lineage>
</organism>
<keyword id="KW-0067">ATP-binding</keyword>
<keyword id="KW-0131">Cell cycle</keyword>
<keyword id="KW-0132">Cell division</keyword>
<keyword id="KW-0133">Cell shape</keyword>
<keyword id="KW-0961">Cell wall biogenesis/degradation</keyword>
<keyword id="KW-0963">Cytoplasm</keyword>
<keyword id="KW-0436">Ligase</keyword>
<keyword id="KW-0547">Nucleotide-binding</keyword>
<keyword id="KW-0573">Peptidoglycan synthesis</keyword>